<feature type="chain" id="PRO_0000258334" description="Phosphoribosylformylglycinamidine cyclo-ligase">
    <location>
        <begin position="1"/>
        <end position="361"/>
    </location>
</feature>
<organism>
    <name type="scientific">Bartonella quintana (strain Toulouse)</name>
    <name type="common">Rochalimaea quintana</name>
    <dbReference type="NCBI Taxonomy" id="283165"/>
    <lineage>
        <taxon>Bacteria</taxon>
        <taxon>Pseudomonadati</taxon>
        <taxon>Pseudomonadota</taxon>
        <taxon>Alphaproteobacteria</taxon>
        <taxon>Hyphomicrobiales</taxon>
        <taxon>Bartonellaceae</taxon>
        <taxon>Bartonella</taxon>
    </lineage>
</organism>
<gene>
    <name evidence="1" type="primary">purM</name>
    <name type="ordered locus">BQ07380</name>
</gene>
<keyword id="KW-0067">ATP-binding</keyword>
<keyword id="KW-0963">Cytoplasm</keyword>
<keyword id="KW-0436">Ligase</keyword>
<keyword id="KW-0547">Nucleotide-binding</keyword>
<keyword id="KW-0658">Purine biosynthesis</keyword>
<comment type="catalytic activity">
    <reaction evidence="1">
        <text>2-formamido-N(1)-(5-O-phospho-beta-D-ribosyl)acetamidine + ATP = 5-amino-1-(5-phospho-beta-D-ribosyl)imidazole + ADP + phosphate + H(+)</text>
        <dbReference type="Rhea" id="RHEA:23032"/>
        <dbReference type="ChEBI" id="CHEBI:15378"/>
        <dbReference type="ChEBI" id="CHEBI:30616"/>
        <dbReference type="ChEBI" id="CHEBI:43474"/>
        <dbReference type="ChEBI" id="CHEBI:137981"/>
        <dbReference type="ChEBI" id="CHEBI:147287"/>
        <dbReference type="ChEBI" id="CHEBI:456216"/>
        <dbReference type="EC" id="6.3.3.1"/>
    </reaction>
</comment>
<comment type="pathway">
    <text evidence="1">Purine metabolism; IMP biosynthesis via de novo pathway; 5-amino-1-(5-phospho-D-ribosyl)imidazole from N(2)-formyl-N(1)-(5-phospho-D-ribosyl)glycinamide: step 2/2.</text>
</comment>
<comment type="subcellular location">
    <subcellularLocation>
        <location evidence="1">Cytoplasm</location>
    </subcellularLocation>
</comment>
<comment type="similarity">
    <text evidence="1">Belongs to the AIR synthase family.</text>
</comment>
<sequence>MSNQDLINCKSNSGLTYAKAGVDIDVGNAMVEKIKPFIRSTKRAGADVEIGGFGGLFDLKAAGFTDPILVAANDGVGTKLKIAIEVGIHDTVGIDLVAMCINDLLVQGAEPLFFLDYFATGKLDPEQGAAIVSGIAVGCQQAGAALIGGETAEMPGMYAKGDYDLAGFAVGATERSALLPSKDLAEGDIILGLSSSGIHSNGFSLVRRIVQQSGLKWGDYAPFNPQMNLGTALLTPTRIYVKSLLPIIKTYKGIKALAHITGGGLPENIPRVLPSSLCAEINLSAIHVPPVFSWIAKQGKIEETEMLRTFNCGIGMVIIVAQHAVETITQILEMQGEIVTLLGILTKHPTKKILYKGVLHL</sequence>
<protein>
    <recommendedName>
        <fullName evidence="1">Phosphoribosylformylglycinamidine cyclo-ligase</fullName>
        <ecNumber evidence="1">6.3.3.1</ecNumber>
    </recommendedName>
    <alternativeName>
        <fullName evidence="1">AIR synthase</fullName>
    </alternativeName>
    <alternativeName>
        <fullName evidence="1">AIRS</fullName>
    </alternativeName>
    <alternativeName>
        <fullName evidence="1">Phosphoribosyl-aminoimidazole synthetase</fullName>
    </alternativeName>
</protein>
<proteinExistence type="inferred from homology"/>
<reference key="1">
    <citation type="journal article" date="2004" name="Proc. Natl. Acad. Sci. U.S.A.">
        <title>The louse-borne human pathogen Bartonella quintana is a genomic derivative of the zoonotic agent Bartonella henselae.</title>
        <authorList>
            <person name="Alsmark U.C.M."/>
            <person name="Frank A.C."/>
            <person name="Karlberg E.O."/>
            <person name="Legault B.-A."/>
            <person name="Ardell D.H."/>
            <person name="Canbaeck B."/>
            <person name="Eriksson A.-S."/>
            <person name="Naeslund A.K."/>
            <person name="Handley S.A."/>
            <person name="Huvet M."/>
            <person name="La Scola B."/>
            <person name="Holmberg M."/>
            <person name="Andersson S.G.E."/>
        </authorList>
    </citation>
    <scope>NUCLEOTIDE SEQUENCE [LARGE SCALE GENOMIC DNA]</scope>
    <source>
        <strain>Toulouse</strain>
    </source>
</reference>
<evidence type="ECO:0000255" key="1">
    <source>
        <dbReference type="HAMAP-Rule" id="MF_00741"/>
    </source>
</evidence>
<name>PUR5_BARQU</name>
<dbReference type="EC" id="6.3.3.1" evidence="1"/>
<dbReference type="EMBL" id="BX897700">
    <property type="protein sequence ID" value="CAF26222.1"/>
    <property type="molecule type" value="Genomic_DNA"/>
</dbReference>
<dbReference type="RefSeq" id="WP_011179474.1">
    <property type="nucleotide sequence ID" value="NC_005955.1"/>
</dbReference>
<dbReference type="SMR" id="Q6FZK1"/>
<dbReference type="KEGG" id="bqu:BQ07380"/>
<dbReference type="eggNOG" id="COG0150">
    <property type="taxonomic scope" value="Bacteria"/>
</dbReference>
<dbReference type="HOGENOM" id="CLU_047116_0_0_5"/>
<dbReference type="OrthoDB" id="9777881at2"/>
<dbReference type="UniPathway" id="UPA00074">
    <property type="reaction ID" value="UER00129"/>
</dbReference>
<dbReference type="Proteomes" id="UP000000597">
    <property type="component" value="Chromosome"/>
</dbReference>
<dbReference type="GO" id="GO:0005829">
    <property type="term" value="C:cytosol"/>
    <property type="evidence" value="ECO:0007669"/>
    <property type="project" value="TreeGrafter"/>
</dbReference>
<dbReference type="GO" id="GO:0005524">
    <property type="term" value="F:ATP binding"/>
    <property type="evidence" value="ECO:0007669"/>
    <property type="project" value="UniProtKB-KW"/>
</dbReference>
<dbReference type="GO" id="GO:0004637">
    <property type="term" value="F:phosphoribosylamine-glycine ligase activity"/>
    <property type="evidence" value="ECO:0007669"/>
    <property type="project" value="TreeGrafter"/>
</dbReference>
<dbReference type="GO" id="GO:0004641">
    <property type="term" value="F:phosphoribosylformylglycinamidine cyclo-ligase activity"/>
    <property type="evidence" value="ECO:0007669"/>
    <property type="project" value="UniProtKB-UniRule"/>
</dbReference>
<dbReference type="GO" id="GO:0006189">
    <property type="term" value="P:'de novo' IMP biosynthetic process"/>
    <property type="evidence" value="ECO:0007669"/>
    <property type="project" value="UniProtKB-UniRule"/>
</dbReference>
<dbReference type="GO" id="GO:0046084">
    <property type="term" value="P:adenine biosynthetic process"/>
    <property type="evidence" value="ECO:0007669"/>
    <property type="project" value="TreeGrafter"/>
</dbReference>
<dbReference type="CDD" id="cd02196">
    <property type="entry name" value="PurM"/>
    <property type="match status" value="1"/>
</dbReference>
<dbReference type="FunFam" id="3.30.1330.10:FF:000001">
    <property type="entry name" value="Phosphoribosylformylglycinamidine cyclo-ligase"/>
    <property type="match status" value="1"/>
</dbReference>
<dbReference type="FunFam" id="3.90.650.10:FF:000011">
    <property type="entry name" value="Phosphoribosylformylglycinamidine cyclo-ligase"/>
    <property type="match status" value="1"/>
</dbReference>
<dbReference type="Gene3D" id="3.90.650.10">
    <property type="entry name" value="PurM-like C-terminal domain"/>
    <property type="match status" value="1"/>
</dbReference>
<dbReference type="Gene3D" id="3.30.1330.10">
    <property type="entry name" value="PurM-like, N-terminal domain"/>
    <property type="match status" value="1"/>
</dbReference>
<dbReference type="HAMAP" id="MF_00741">
    <property type="entry name" value="AIRS"/>
    <property type="match status" value="1"/>
</dbReference>
<dbReference type="InterPro" id="IPR010918">
    <property type="entry name" value="PurM-like_C_dom"/>
</dbReference>
<dbReference type="InterPro" id="IPR036676">
    <property type="entry name" value="PurM-like_C_sf"/>
</dbReference>
<dbReference type="InterPro" id="IPR016188">
    <property type="entry name" value="PurM-like_N"/>
</dbReference>
<dbReference type="InterPro" id="IPR036921">
    <property type="entry name" value="PurM-like_N_sf"/>
</dbReference>
<dbReference type="InterPro" id="IPR004733">
    <property type="entry name" value="PurM_cligase"/>
</dbReference>
<dbReference type="NCBIfam" id="TIGR00878">
    <property type="entry name" value="purM"/>
    <property type="match status" value="1"/>
</dbReference>
<dbReference type="PANTHER" id="PTHR10520:SF12">
    <property type="entry name" value="TRIFUNCTIONAL PURINE BIOSYNTHETIC PROTEIN ADENOSINE-3"/>
    <property type="match status" value="1"/>
</dbReference>
<dbReference type="PANTHER" id="PTHR10520">
    <property type="entry name" value="TRIFUNCTIONAL PURINE BIOSYNTHETIC PROTEIN ADENOSINE-3-RELATED"/>
    <property type="match status" value="1"/>
</dbReference>
<dbReference type="Pfam" id="PF00586">
    <property type="entry name" value="AIRS"/>
    <property type="match status" value="1"/>
</dbReference>
<dbReference type="Pfam" id="PF02769">
    <property type="entry name" value="AIRS_C"/>
    <property type="match status" value="1"/>
</dbReference>
<dbReference type="SUPFAM" id="SSF56042">
    <property type="entry name" value="PurM C-terminal domain-like"/>
    <property type="match status" value="1"/>
</dbReference>
<dbReference type="SUPFAM" id="SSF55326">
    <property type="entry name" value="PurM N-terminal domain-like"/>
    <property type="match status" value="1"/>
</dbReference>
<accession>Q6FZK1</accession>